<accession>O60476</accession>
<accession>Q9H510</accession>
<keyword id="KW-0007">Acetylation</keyword>
<keyword id="KW-0106">Calcium</keyword>
<keyword id="KW-1015">Disulfide bond</keyword>
<keyword id="KW-0325">Glycoprotein</keyword>
<keyword id="KW-0326">Glycosidase</keyword>
<keyword id="KW-0333">Golgi apparatus</keyword>
<keyword id="KW-0378">Hydrolase</keyword>
<keyword id="KW-0472">Membrane</keyword>
<keyword id="KW-0479">Metal-binding</keyword>
<keyword id="KW-1267">Proteomics identification</keyword>
<keyword id="KW-1185">Reference proteome</keyword>
<keyword id="KW-0735">Signal-anchor</keyword>
<keyword id="KW-0812">Transmembrane</keyword>
<keyword id="KW-1133">Transmembrane helix</keyword>
<evidence type="ECO:0000250" key="1">
    <source>
        <dbReference type="UniProtKB" id="P31723"/>
    </source>
</evidence>
<evidence type="ECO:0000250" key="2">
    <source>
        <dbReference type="UniProtKB" id="P32906"/>
    </source>
</evidence>
<evidence type="ECO:0000250" key="3">
    <source>
        <dbReference type="UniProtKB" id="P45700"/>
    </source>
</evidence>
<evidence type="ECO:0000255" key="4"/>
<evidence type="ECO:0000256" key="5">
    <source>
        <dbReference type="SAM" id="MobiDB-lite"/>
    </source>
</evidence>
<evidence type="ECO:0000305" key="6"/>
<evidence type="ECO:0007744" key="7">
    <source>
    </source>
</evidence>
<gene>
    <name type="primary">MAN1A2</name>
    <name type="synonym">MAN1B</name>
</gene>
<dbReference type="EC" id="3.2.1.113" evidence="2"/>
<dbReference type="EMBL" id="AF053626">
    <property type="protein sequence ID" value="AAC26201.1"/>
    <property type="molecule type" value="Genomic_DNA"/>
</dbReference>
<dbReference type="EMBL" id="AF053622">
    <property type="protein sequence ID" value="AAC26201.1"/>
    <property type="status" value="JOINED"/>
    <property type="molecule type" value="Genomic_DNA"/>
</dbReference>
<dbReference type="EMBL" id="AF053623">
    <property type="protein sequence ID" value="AAC26201.1"/>
    <property type="status" value="JOINED"/>
    <property type="molecule type" value="Genomic_DNA"/>
</dbReference>
<dbReference type="EMBL" id="AF053624">
    <property type="protein sequence ID" value="AAC26201.1"/>
    <property type="status" value="JOINED"/>
    <property type="molecule type" value="Genomic_DNA"/>
</dbReference>
<dbReference type="EMBL" id="AF053625">
    <property type="protein sequence ID" value="AAC26201.1"/>
    <property type="status" value="JOINED"/>
    <property type="molecule type" value="Genomic_DNA"/>
</dbReference>
<dbReference type="EMBL" id="AF027156">
    <property type="protein sequence ID" value="AAC26169.1"/>
    <property type="molecule type" value="mRNA"/>
</dbReference>
<dbReference type="EMBL" id="AF053621">
    <property type="protein sequence ID" value="AAC26200.1"/>
    <property type="molecule type" value="Genomic_DNA"/>
</dbReference>
<dbReference type="EMBL" id="AF053619">
    <property type="protein sequence ID" value="AAC26200.1"/>
    <property type="status" value="JOINED"/>
    <property type="molecule type" value="Genomic_DNA"/>
</dbReference>
<dbReference type="EMBL" id="AF053620">
    <property type="protein sequence ID" value="AAC26200.1"/>
    <property type="status" value="JOINED"/>
    <property type="molecule type" value="Genomic_DNA"/>
</dbReference>
<dbReference type="EMBL" id="AF053615">
    <property type="protein sequence ID" value="AAC26200.1"/>
    <property type="status" value="JOINED"/>
    <property type="molecule type" value="Genomic_DNA"/>
</dbReference>
<dbReference type="EMBL" id="AF053616">
    <property type="protein sequence ID" value="AAC26200.1"/>
    <property type="status" value="JOINED"/>
    <property type="molecule type" value="Genomic_DNA"/>
</dbReference>
<dbReference type="EMBL" id="AF053617">
    <property type="protein sequence ID" value="AAC26200.1"/>
    <property type="status" value="JOINED"/>
    <property type="molecule type" value="Genomic_DNA"/>
</dbReference>
<dbReference type="EMBL" id="AF053618">
    <property type="protein sequence ID" value="AAC26200.1"/>
    <property type="status" value="JOINED"/>
    <property type="molecule type" value="Genomic_DNA"/>
</dbReference>
<dbReference type="EMBL" id="AL157902">
    <property type="status" value="NOT_ANNOTATED_CDS"/>
    <property type="molecule type" value="Genomic_DNA"/>
</dbReference>
<dbReference type="EMBL" id="AL358072">
    <property type="status" value="NOT_ANNOTATED_CDS"/>
    <property type="molecule type" value="Genomic_DNA"/>
</dbReference>
<dbReference type="EMBL" id="BC063300">
    <property type="protein sequence ID" value="AAH63300.1"/>
    <property type="molecule type" value="mRNA"/>
</dbReference>
<dbReference type="CCDS" id="CCDS895.1"/>
<dbReference type="RefSeq" id="NP_006690.1">
    <property type="nucleotide sequence ID" value="NM_006699.5"/>
</dbReference>
<dbReference type="SMR" id="O60476"/>
<dbReference type="BioGRID" id="116111">
    <property type="interactions" value="54"/>
</dbReference>
<dbReference type="FunCoup" id="O60476">
    <property type="interactions" value="2624"/>
</dbReference>
<dbReference type="IntAct" id="O60476">
    <property type="interactions" value="35"/>
</dbReference>
<dbReference type="MINT" id="O60476"/>
<dbReference type="STRING" id="9606.ENSP00000348959"/>
<dbReference type="CAZy" id="GH47">
    <property type="family name" value="Glycoside Hydrolase Family 47"/>
</dbReference>
<dbReference type="GlyCosmos" id="O60476">
    <property type="glycosylation" value="1 site, No reported glycans"/>
</dbReference>
<dbReference type="GlyGen" id="O60476">
    <property type="glycosylation" value="2 sites, 1 O-linked glycan (1 site)"/>
</dbReference>
<dbReference type="iPTMnet" id="O60476"/>
<dbReference type="PhosphoSitePlus" id="O60476"/>
<dbReference type="SwissPalm" id="O60476"/>
<dbReference type="BioMuta" id="MAN1A2"/>
<dbReference type="jPOST" id="O60476"/>
<dbReference type="MassIVE" id="O60476"/>
<dbReference type="PaxDb" id="9606-ENSP00000348959"/>
<dbReference type="PeptideAtlas" id="O60476"/>
<dbReference type="ProteomicsDB" id="49416"/>
<dbReference type="Pumba" id="O60476"/>
<dbReference type="Antibodypedia" id="33890">
    <property type="antibodies" value="96 antibodies from 25 providers"/>
</dbReference>
<dbReference type="DNASU" id="10905"/>
<dbReference type="Ensembl" id="ENST00000356554.7">
    <property type="protein sequence ID" value="ENSP00000348959.3"/>
    <property type="gene ID" value="ENSG00000198162.12"/>
</dbReference>
<dbReference type="GeneID" id="10905"/>
<dbReference type="KEGG" id="hsa:10905"/>
<dbReference type="MANE-Select" id="ENST00000356554.7">
    <property type="protein sequence ID" value="ENSP00000348959.3"/>
    <property type="RefSeq nucleotide sequence ID" value="NM_006699.5"/>
    <property type="RefSeq protein sequence ID" value="NP_006690.1"/>
</dbReference>
<dbReference type="UCSC" id="uc001ehd.2">
    <property type="organism name" value="human"/>
</dbReference>
<dbReference type="AGR" id="HGNC:6822"/>
<dbReference type="CTD" id="10905"/>
<dbReference type="DisGeNET" id="10905"/>
<dbReference type="GeneCards" id="MAN1A2"/>
<dbReference type="HGNC" id="HGNC:6822">
    <property type="gene designation" value="MAN1A2"/>
</dbReference>
<dbReference type="HPA" id="ENSG00000198162">
    <property type="expression patterns" value="Low tissue specificity"/>
</dbReference>
<dbReference type="MIM" id="604345">
    <property type="type" value="gene"/>
</dbReference>
<dbReference type="neXtProt" id="NX_O60476"/>
<dbReference type="OpenTargets" id="ENSG00000198162"/>
<dbReference type="PharmGKB" id="PA30571"/>
<dbReference type="VEuPathDB" id="HostDB:ENSG00000198162"/>
<dbReference type="eggNOG" id="KOG2204">
    <property type="taxonomic scope" value="Eukaryota"/>
</dbReference>
<dbReference type="GeneTree" id="ENSGT00940000157498"/>
<dbReference type="HOGENOM" id="CLU_003818_3_2_1"/>
<dbReference type="InParanoid" id="O60476"/>
<dbReference type="OMA" id="PESFGWD"/>
<dbReference type="OrthoDB" id="8118055at2759"/>
<dbReference type="PAN-GO" id="O60476">
    <property type="GO annotations" value="4 GO annotations based on evolutionary models"/>
</dbReference>
<dbReference type="PhylomeDB" id="O60476"/>
<dbReference type="TreeFam" id="TF313420"/>
<dbReference type="BioCyc" id="MetaCyc:HS05846-MONOMER"/>
<dbReference type="BRENDA" id="3.2.1.113">
    <property type="organism ID" value="2681"/>
</dbReference>
<dbReference type="PathwayCommons" id="O60476"/>
<dbReference type="Reactome" id="R-HSA-6811438">
    <property type="pathway name" value="Intra-Golgi traffic"/>
</dbReference>
<dbReference type="Reactome" id="R-HSA-964827">
    <property type="pathway name" value="Progressive trimming of alpha-1,2-linked mannose residues from Man9/8/7GlcNAc2 to produce Man5GlcNAc2"/>
</dbReference>
<dbReference type="SignaLink" id="O60476"/>
<dbReference type="UniPathway" id="UPA00378"/>
<dbReference type="BioGRID-ORCS" id="10905">
    <property type="hits" value="25 hits in 1157 CRISPR screens"/>
</dbReference>
<dbReference type="ChiTaRS" id="MAN1A2">
    <property type="organism name" value="human"/>
</dbReference>
<dbReference type="GeneWiki" id="MAN1A2"/>
<dbReference type="GenomeRNAi" id="10905"/>
<dbReference type="Pharos" id="O60476">
    <property type="development level" value="Tbio"/>
</dbReference>
<dbReference type="PRO" id="PR:O60476"/>
<dbReference type="Proteomes" id="UP000005640">
    <property type="component" value="Chromosome 1"/>
</dbReference>
<dbReference type="RNAct" id="O60476">
    <property type="molecule type" value="protein"/>
</dbReference>
<dbReference type="Bgee" id="ENSG00000198162">
    <property type="expression patterns" value="Expressed in middle temporal gyrus and 207 other cell types or tissues"/>
</dbReference>
<dbReference type="ExpressionAtlas" id="O60476">
    <property type="expression patterns" value="baseline and differential"/>
</dbReference>
<dbReference type="GO" id="GO:0005783">
    <property type="term" value="C:endoplasmic reticulum"/>
    <property type="evidence" value="ECO:0000318"/>
    <property type="project" value="GO_Central"/>
</dbReference>
<dbReference type="GO" id="GO:0070062">
    <property type="term" value="C:extracellular exosome"/>
    <property type="evidence" value="ECO:0007005"/>
    <property type="project" value="UniProtKB"/>
</dbReference>
<dbReference type="GO" id="GO:0005794">
    <property type="term" value="C:Golgi apparatus"/>
    <property type="evidence" value="ECO:0000314"/>
    <property type="project" value="HPA"/>
</dbReference>
<dbReference type="GO" id="GO:0000139">
    <property type="term" value="C:Golgi membrane"/>
    <property type="evidence" value="ECO:0000318"/>
    <property type="project" value="GO_Central"/>
</dbReference>
<dbReference type="GO" id="GO:0016020">
    <property type="term" value="C:membrane"/>
    <property type="evidence" value="ECO:0007005"/>
    <property type="project" value="UniProtKB"/>
</dbReference>
<dbReference type="GO" id="GO:0005509">
    <property type="term" value="F:calcium ion binding"/>
    <property type="evidence" value="ECO:0007669"/>
    <property type="project" value="InterPro"/>
</dbReference>
<dbReference type="GO" id="GO:0004571">
    <property type="term" value="F:mannosyl-oligosaccharide 1,2-alpha-mannosidase activity"/>
    <property type="evidence" value="ECO:0000318"/>
    <property type="project" value="GO_Central"/>
</dbReference>
<dbReference type="GO" id="GO:0005975">
    <property type="term" value="P:carbohydrate metabolic process"/>
    <property type="evidence" value="ECO:0007669"/>
    <property type="project" value="InterPro"/>
</dbReference>
<dbReference type="GO" id="GO:0036503">
    <property type="term" value="P:ERAD pathway"/>
    <property type="evidence" value="ECO:0000318"/>
    <property type="project" value="GO_Central"/>
</dbReference>
<dbReference type="GO" id="GO:1904381">
    <property type="term" value="P:Golgi apparatus mannose trimming"/>
    <property type="evidence" value="ECO:0000304"/>
    <property type="project" value="Reactome"/>
</dbReference>
<dbReference type="GO" id="GO:0048286">
    <property type="term" value="P:lung alveolus development"/>
    <property type="evidence" value="ECO:0007669"/>
    <property type="project" value="Ensembl"/>
</dbReference>
<dbReference type="GO" id="GO:0006491">
    <property type="term" value="P:N-glycan processing"/>
    <property type="evidence" value="ECO:0000304"/>
    <property type="project" value="ProtInc"/>
</dbReference>
<dbReference type="GO" id="GO:0006486">
    <property type="term" value="P:protein glycosylation"/>
    <property type="evidence" value="ECO:0007669"/>
    <property type="project" value="UniProtKB-UniPathway"/>
</dbReference>
<dbReference type="GO" id="GO:0007585">
    <property type="term" value="P:respiratory gaseous exchange by respiratory system"/>
    <property type="evidence" value="ECO:0007669"/>
    <property type="project" value="Ensembl"/>
</dbReference>
<dbReference type="FunFam" id="1.50.10.10:FF:000002">
    <property type="entry name" value="alpha-1,2-Mannosidase"/>
    <property type="match status" value="1"/>
</dbReference>
<dbReference type="Gene3D" id="1.50.10.10">
    <property type="match status" value="1"/>
</dbReference>
<dbReference type="InterPro" id="IPR012341">
    <property type="entry name" value="6hp_glycosidase-like_sf"/>
</dbReference>
<dbReference type="InterPro" id="IPR001382">
    <property type="entry name" value="Glyco_hydro_47"/>
</dbReference>
<dbReference type="InterPro" id="IPR050749">
    <property type="entry name" value="Glycosyl_Hydrolase_47"/>
</dbReference>
<dbReference type="InterPro" id="IPR036026">
    <property type="entry name" value="Seven-hairpin_glycosidases"/>
</dbReference>
<dbReference type="PANTHER" id="PTHR11742:SF40">
    <property type="entry name" value="MANNOSYL-OLIGOSACCHARIDE 1,2-ALPHA-MANNOSIDASE IB"/>
    <property type="match status" value="1"/>
</dbReference>
<dbReference type="PANTHER" id="PTHR11742">
    <property type="entry name" value="MANNOSYL-OLIGOSACCHARIDE ALPHA-1,2-MANNOSIDASE-RELATED"/>
    <property type="match status" value="1"/>
</dbReference>
<dbReference type="Pfam" id="PF01532">
    <property type="entry name" value="Glyco_hydro_47"/>
    <property type="match status" value="1"/>
</dbReference>
<dbReference type="PRINTS" id="PR00747">
    <property type="entry name" value="GLYHDRLASE47"/>
</dbReference>
<dbReference type="SUPFAM" id="SSF48225">
    <property type="entry name" value="Seven-hairpin glycosidases"/>
    <property type="match status" value="1"/>
</dbReference>
<name>MA1A2_HUMAN</name>
<organism>
    <name type="scientific">Homo sapiens</name>
    <name type="common">Human</name>
    <dbReference type="NCBI Taxonomy" id="9606"/>
    <lineage>
        <taxon>Eukaryota</taxon>
        <taxon>Metazoa</taxon>
        <taxon>Chordata</taxon>
        <taxon>Craniata</taxon>
        <taxon>Vertebrata</taxon>
        <taxon>Euteleostomi</taxon>
        <taxon>Mammalia</taxon>
        <taxon>Eutheria</taxon>
        <taxon>Euarchontoglires</taxon>
        <taxon>Primates</taxon>
        <taxon>Haplorrhini</taxon>
        <taxon>Catarrhini</taxon>
        <taxon>Hominidae</taxon>
        <taxon>Homo</taxon>
    </lineage>
</organism>
<comment type="function">
    <text>Involved in the maturation of Asn-linked oligosaccharides. Progressively trim alpha-1,2-linked mannose residues from Man(9)GlcNAc(2) to produce Man(5)GlcNAc(2).</text>
</comment>
<comment type="catalytic activity">
    <reaction evidence="2">
        <text>N(4)-(alpha-D-Man-(1-&gt;2)-alpha-D-Man-(1-&gt;2)-alpha-D-Man-(1-&gt;3)-[alpha-D-Man-(1-&gt;2)-alpha-D-Man-(1-&gt;3)-[alpha-D-Man-(1-&gt;2)-alpha-D-Man-(1-&gt;6)]-alpha-D-Man-(1-&gt;6)]-beta-D-Man-(1-&gt;4)-beta-D-GlcNAc-(1-&gt;4)-beta-D-GlcNAc)-L-asparaginyl-[protein] (N-glucan mannose isomer 9A1,2,3B1,2,3) + 4 H2O = N(4)-(alpha-D-Man-(1-&gt;3)-[alpha-D-Man-(1-&gt;3)-[alpha-D-Man-(1-&gt;6)]-alpha-D-Man-(1-&gt;6)]-beta-D-Man-(1-&gt;4)-beta-D-GlcNAc-(1-&gt;4)-beta-D-GlcNAc)-L-asparaginyl-[protein] (N-glucan mannose isomer 5A1,2) + 4 beta-D-mannose</text>
        <dbReference type="Rhea" id="RHEA:56008"/>
        <dbReference type="Rhea" id="RHEA-COMP:14356"/>
        <dbReference type="Rhea" id="RHEA-COMP:14367"/>
        <dbReference type="ChEBI" id="CHEBI:15377"/>
        <dbReference type="ChEBI" id="CHEBI:28563"/>
        <dbReference type="ChEBI" id="CHEBI:59087"/>
        <dbReference type="ChEBI" id="CHEBI:139493"/>
        <dbReference type="EC" id="3.2.1.113"/>
    </reaction>
</comment>
<comment type="catalytic activity">
    <reaction evidence="2">
        <text>N(4)-(alpha-D-Man-(1-&gt;2)-alpha-D-Man-(1-&gt;2)-alpha-D-Man-(1-&gt;3)-[alpha-D-Man-(1-&gt;3)-[alpha-D-Man-(1-&gt;2)-alpha-D-Man-(1-&gt;6)]-alpha-D-Man-(1-&gt;6)]-beta-D-Man-(1-&gt;4)-beta-D-GlcNAc-(1-&gt;4)-beta-D-GlcNAc)-L-asparaginyl-[protein] (N-glucan mannose isomer 8A1,2,3B1,3) + 3 H2O = N(4)-(alpha-D-Man-(1-&gt;3)-[alpha-D-Man-(1-&gt;3)-[alpha-D-Man-(1-&gt;6)]-alpha-D-Man-(1-&gt;6)]-beta-D-Man-(1-&gt;4)-beta-D-GlcNAc-(1-&gt;4)-beta-D-GlcNAc)-L-asparaginyl-[protein] (N-glucan mannose isomer 5A1,2) + 3 beta-D-mannose</text>
        <dbReference type="Rhea" id="RHEA:56028"/>
        <dbReference type="Rhea" id="RHEA-COMP:14358"/>
        <dbReference type="Rhea" id="RHEA-COMP:14367"/>
        <dbReference type="ChEBI" id="CHEBI:15377"/>
        <dbReference type="ChEBI" id="CHEBI:28563"/>
        <dbReference type="ChEBI" id="CHEBI:59087"/>
        <dbReference type="ChEBI" id="CHEBI:60628"/>
        <dbReference type="EC" id="3.2.1.113"/>
    </reaction>
</comment>
<comment type="cofactor">
    <cofactor evidence="3">
        <name>Ca(2+)</name>
        <dbReference type="ChEBI" id="CHEBI:29108"/>
    </cofactor>
</comment>
<comment type="activity regulation">
    <text>Inhibited by both 1-deoxymannojirimycin and kifunensine.</text>
</comment>
<comment type="pathway">
    <text evidence="2">Protein modification; protein glycosylation.</text>
</comment>
<comment type="subcellular location">
    <subcellularLocation>
        <location>Golgi apparatus membrane</location>
        <topology>Single-pass type II membrane protein</topology>
    </subcellularLocation>
</comment>
<comment type="tissue specificity">
    <text>Highest levels of expression in placenta and testis.</text>
</comment>
<comment type="similarity">
    <text evidence="6">Belongs to the glycosyl hydrolase 47 family.</text>
</comment>
<feature type="initiator methionine" description="Removed" evidence="7">
    <location>
        <position position="1"/>
    </location>
</feature>
<feature type="chain" id="PRO_0000210312" description="Mannosyl-oligosaccharide 1,2-alpha-mannosidase IB">
    <location>
        <begin position="2"/>
        <end position="641"/>
    </location>
</feature>
<feature type="topological domain" description="Cytoplasmic" evidence="4">
    <location>
        <begin position="2"/>
        <end position="36"/>
    </location>
</feature>
<feature type="transmembrane region" description="Helical; Signal-anchor for type II membrane protein" evidence="4">
    <location>
        <begin position="37"/>
        <end position="57"/>
    </location>
</feature>
<feature type="topological domain" description="Lumenal" evidence="4">
    <location>
        <begin position="58"/>
        <end position="641"/>
    </location>
</feature>
<feature type="region of interest" description="Disordered" evidence="5">
    <location>
        <begin position="153"/>
        <end position="175"/>
    </location>
</feature>
<feature type="active site" description="Proton donor" evidence="1">
    <location>
        <position position="508"/>
    </location>
</feature>
<feature type="binding site" evidence="2">
    <location>
        <position position="619"/>
    </location>
    <ligand>
        <name>Ca(2+)</name>
        <dbReference type="ChEBI" id="CHEBI:29108"/>
    </ligand>
</feature>
<feature type="modified residue" description="N-acetylthreonine" evidence="7">
    <location>
        <position position="2"/>
    </location>
</feature>
<feature type="glycosylation site" description="N-linked (GlcNAc...) asparagine" evidence="4">
    <location>
        <position position="631"/>
    </location>
</feature>
<feature type="disulfide bond" evidence="2">
    <location>
        <begin position="462"/>
        <end position="494"/>
    </location>
</feature>
<sequence length="641" mass="73004">MTTPALLPLSGRRIPPLNLGPPSFPHHRATLRLSEKFILLLILSAFITLCFGAFFFLPDSSKHKRFDLGLEDVLIPHVDAGKGAKNPGVFLIHGPDEHRHREEEERLRNKIRADHEKALEEAKEKLRKSREEIRAEIQTEKNKVVQEMKIKENKPLPPVPIPNLVGIRGGDPEDNDIREKREKIKEMMKHAWDNYRTYGWGHNELRPIARKGHSPNIFGSSQMGATIVDALDTLYIMGLHDEFLDGQRWIEDNLDFSVNSEVSVFEVNIRFIGGLLAAYYLSGEEIFKIKAVQLAEKLLPAFNTPTGIPWAMVNLKSGVGRNWGWASAGSSILAEFGTLHMEFIHLSYLTGDLTYYKKVMHIRKLLQKMDRPNGLYPNYLNPRTGRWGQYHTSVGGLGDSFYEYLLKAWLMSDKTDHEARKMYDDAIEAIEKHLIKKSRGGLTFIGEWKNGHLEKKMGHLACFAGGMFALGADGSRADKAGHYLELGAEIARTCHESYDRTALKLGPESFKFDGAVEAVAVRQAEKYYILRPEVIETYWYLWRFTHDPRYRQWGWEAALAIEKYCRVNGGFSGVKDVYSSTPTHDDVQQSFFLAETLKYLYLLFSGDDLLPLDHWVFNTEAHPLPVLHLANTTLSGNPAVR</sequence>
<reference key="1">
    <citation type="journal article" date="1998" name="Glycobiology">
        <title>Molecular cloning, chromosomal mapping and tissue-specific expression of a novel human alpha-1,2-mannosidase gene involved in N-glycan maturation.</title>
        <authorList>
            <person name="Tremblay L.O."/>
            <person name="Campbell-Dyke N."/>
            <person name="Herscovics A."/>
        </authorList>
    </citation>
    <scope>NUCLEOTIDE SEQUENCE [GENOMIC DNA]</scope>
    <source>
        <tissue>Brain</tissue>
        <tissue>Placenta</tissue>
    </source>
</reference>
<reference key="2">
    <citation type="journal article" date="2006" name="Nature">
        <title>The DNA sequence and biological annotation of human chromosome 1.</title>
        <authorList>
            <person name="Gregory S.G."/>
            <person name="Barlow K.F."/>
            <person name="McLay K.E."/>
            <person name="Kaul R."/>
            <person name="Swarbreck D."/>
            <person name="Dunham A."/>
            <person name="Scott C.E."/>
            <person name="Howe K.L."/>
            <person name="Woodfine K."/>
            <person name="Spencer C.C.A."/>
            <person name="Jones M.C."/>
            <person name="Gillson C."/>
            <person name="Searle S."/>
            <person name="Zhou Y."/>
            <person name="Kokocinski F."/>
            <person name="McDonald L."/>
            <person name="Evans R."/>
            <person name="Phillips K."/>
            <person name="Atkinson A."/>
            <person name="Cooper R."/>
            <person name="Jones C."/>
            <person name="Hall R.E."/>
            <person name="Andrews T.D."/>
            <person name="Lloyd C."/>
            <person name="Ainscough R."/>
            <person name="Almeida J.P."/>
            <person name="Ambrose K.D."/>
            <person name="Anderson F."/>
            <person name="Andrew R.W."/>
            <person name="Ashwell R.I.S."/>
            <person name="Aubin K."/>
            <person name="Babbage A.K."/>
            <person name="Bagguley C.L."/>
            <person name="Bailey J."/>
            <person name="Beasley H."/>
            <person name="Bethel G."/>
            <person name="Bird C.P."/>
            <person name="Bray-Allen S."/>
            <person name="Brown J.Y."/>
            <person name="Brown A.J."/>
            <person name="Buckley D."/>
            <person name="Burton J."/>
            <person name="Bye J."/>
            <person name="Carder C."/>
            <person name="Chapman J.C."/>
            <person name="Clark S.Y."/>
            <person name="Clarke G."/>
            <person name="Clee C."/>
            <person name="Cobley V."/>
            <person name="Collier R.E."/>
            <person name="Corby N."/>
            <person name="Coville G.J."/>
            <person name="Davies J."/>
            <person name="Deadman R."/>
            <person name="Dunn M."/>
            <person name="Earthrowl M."/>
            <person name="Ellington A.G."/>
            <person name="Errington H."/>
            <person name="Frankish A."/>
            <person name="Frankland J."/>
            <person name="French L."/>
            <person name="Garner P."/>
            <person name="Garnett J."/>
            <person name="Gay L."/>
            <person name="Ghori M.R.J."/>
            <person name="Gibson R."/>
            <person name="Gilby L.M."/>
            <person name="Gillett W."/>
            <person name="Glithero R.J."/>
            <person name="Grafham D.V."/>
            <person name="Griffiths C."/>
            <person name="Griffiths-Jones S."/>
            <person name="Grocock R."/>
            <person name="Hammond S."/>
            <person name="Harrison E.S.I."/>
            <person name="Hart E."/>
            <person name="Haugen E."/>
            <person name="Heath P.D."/>
            <person name="Holmes S."/>
            <person name="Holt K."/>
            <person name="Howden P.J."/>
            <person name="Hunt A.R."/>
            <person name="Hunt S.E."/>
            <person name="Hunter G."/>
            <person name="Isherwood J."/>
            <person name="James R."/>
            <person name="Johnson C."/>
            <person name="Johnson D."/>
            <person name="Joy A."/>
            <person name="Kay M."/>
            <person name="Kershaw J.K."/>
            <person name="Kibukawa M."/>
            <person name="Kimberley A.M."/>
            <person name="King A."/>
            <person name="Knights A.J."/>
            <person name="Lad H."/>
            <person name="Laird G."/>
            <person name="Lawlor S."/>
            <person name="Leongamornlert D.A."/>
            <person name="Lloyd D.M."/>
            <person name="Loveland J."/>
            <person name="Lovell J."/>
            <person name="Lush M.J."/>
            <person name="Lyne R."/>
            <person name="Martin S."/>
            <person name="Mashreghi-Mohammadi M."/>
            <person name="Matthews L."/>
            <person name="Matthews N.S.W."/>
            <person name="McLaren S."/>
            <person name="Milne S."/>
            <person name="Mistry S."/>
            <person name="Moore M.J.F."/>
            <person name="Nickerson T."/>
            <person name="O'Dell C.N."/>
            <person name="Oliver K."/>
            <person name="Palmeiri A."/>
            <person name="Palmer S.A."/>
            <person name="Parker A."/>
            <person name="Patel D."/>
            <person name="Pearce A.V."/>
            <person name="Peck A.I."/>
            <person name="Pelan S."/>
            <person name="Phelps K."/>
            <person name="Phillimore B.J."/>
            <person name="Plumb R."/>
            <person name="Rajan J."/>
            <person name="Raymond C."/>
            <person name="Rouse G."/>
            <person name="Saenphimmachak C."/>
            <person name="Sehra H.K."/>
            <person name="Sheridan E."/>
            <person name="Shownkeen R."/>
            <person name="Sims S."/>
            <person name="Skuce C.D."/>
            <person name="Smith M."/>
            <person name="Steward C."/>
            <person name="Subramanian S."/>
            <person name="Sycamore N."/>
            <person name="Tracey A."/>
            <person name="Tromans A."/>
            <person name="Van Helmond Z."/>
            <person name="Wall M."/>
            <person name="Wallis J.M."/>
            <person name="White S."/>
            <person name="Whitehead S.L."/>
            <person name="Wilkinson J.E."/>
            <person name="Willey D.L."/>
            <person name="Williams H."/>
            <person name="Wilming L."/>
            <person name="Wray P.W."/>
            <person name="Wu Z."/>
            <person name="Coulson A."/>
            <person name="Vaudin M."/>
            <person name="Sulston J.E."/>
            <person name="Durbin R.M."/>
            <person name="Hubbard T."/>
            <person name="Wooster R."/>
            <person name="Dunham I."/>
            <person name="Carter N.P."/>
            <person name="McVean G."/>
            <person name="Ross M.T."/>
            <person name="Harrow J."/>
            <person name="Olson M.V."/>
            <person name="Beck S."/>
            <person name="Rogers J."/>
            <person name="Bentley D.R."/>
        </authorList>
    </citation>
    <scope>NUCLEOTIDE SEQUENCE [LARGE SCALE GENOMIC DNA]</scope>
</reference>
<reference key="3">
    <citation type="journal article" date="2004" name="Genome Res.">
        <title>The status, quality, and expansion of the NIH full-length cDNA project: the Mammalian Gene Collection (MGC).</title>
        <authorList>
            <consortium name="The MGC Project Team"/>
        </authorList>
    </citation>
    <scope>NUCLEOTIDE SEQUENCE [LARGE SCALE MRNA]</scope>
    <source>
        <tissue>Brain</tissue>
    </source>
</reference>
<reference key="4">
    <citation type="journal article" date="2012" name="Mol. Cell. Proteomics">
        <title>Comparative large-scale characterisation of plant vs. mammal proteins reveals similar and idiosyncratic N-alpha acetylation features.</title>
        <authorList>
            <person name="Bienvenut W.V."/>
            <person name="Sumpton D."/>
            <person name="Martinez A."/>
            <person name="Lilla S."/>
            <person name="Espagne C."/>
            <person name="Meinnel T."/>
            <person name="Giglione C."/>
        </authorList>
    </citation>
    <scope>ACETYLATION [LARGE SCALE ANALYSIS] AT THR-2</scope>
    <scope>CLEAVAGE OF INITIATOR METHIONINE [LARGE SCALE ANALYSIS]</scope>
    <scope>IDENTIFICATION BY MASS SPECTROMETRY [LARGE SCALE ANALYSIS]</scope>
</reference>
<reference key="5">
    <citation type="journal article" date="2012" name="Proc. Natl. Acad. Sci. U.S.A.">
        <title>N-terminal acetylome analyses and functional insights of the N-terminal acetyltransferase NatB.</title>
        <authorList>
            <person name="Van Damme P."/>
            <person name="Lasa M."/>
            <person name="Polevoda B."/>
            <person name="Gazquez C."/>
            <person name="Elosegui-Artola A."/>
            <person name="Kim D.S."/>
            <person name="De Juan-Pardo E."/>
            <person name="Demeyer K."/>
            <person name="Hole K."/>
            <person name="Larrea E."/>
            <person name="Timmerman E."/>
            <person name="Prieto J."/>
            <person name="Arnesen T."/>
            <person name="Sherman F."/>
            <person name="Gevaert K."/>
            <person name="Aldabe R."/>
        </authorList>
    </citation>
    <scope>IDENTIFICATION BY MASS SPECTROMETRY [LARGE SCALE ANALYSIS]</scope>
</reference>
<proteinExistence type="evidence at protein level"/>
<protein>
    <recommendedName>
        <fullName>Mannosyl-oligosaccharide 1,2-alpha-mannosidase IB</fullName>
        <ecNumber evidence="2">3.2.1.113</ecNumber>
    </recommendedName>
    <alternativeName>
        <fullName>Mannosidase alpha class 1A member 2</fullName>
    </alternativeName>
    <alternativeName>
        <fullName>Processing alpha-1,2-mannosidase IB</fullName>
        <shortName>Alpha-1,2-mannosidase IB</shortName>
    </alternativeName>
</protein>